<evidence type="ECO:0000250" key="1">
    <source>
        <dbReference type="UniProtKB" id="Q13616"/>
    </source>
</evidence>
<evidence type="ECO:0000250" key="2">
    <source>
        <dbReference type="UniProtKB" id="Q13618"/>
    </source>
</evidence>
<evidence type="ECO:0000250" key="3">
    <source>
        <dbReference type="UniProtKB" id="Q9JLV5"/>
    </source>
</evidence>
<evidence type="ECO:0000255" key="4"/>
<evidence type="ECO:0000255" key="5">
    <source>
        <dbReference type="PROSITE-ProRule" id="PRU00330"/>
    </source>
</evidence>
<evidence type="ECO:0000256" key="6">
    <source>
        <dbReference type="SAM" id="MobiDB-lite"/>
    </source>
</evidence>
<evidence type="ECO:0000269" key="7">
    <source>
    </source>
</evidence>
<comment type="function">
    <text evidence="2 3">Probable core component of cullin-based SCF-like E3 ubiquitin-protein ligase complexes which mediate the ubiquitination and subsequent proteasomal degradation of target proteins (By similarity). The E3 ubiquitin-protein ligase activity of the complex is dependent on the neddylation of the cullin subunit (By similarity). Involved in ER-Golgi transport by regulating the size of COPII coats, thereby playing a key role in collagen export, which is required for embryonic stem (ES) cells division (By similarity). May play a role in the regulation of mittotic entry via ubiquitination of aurka (By similarity).</text>
</comment>
<comment type="pathway">
    <text>Protein modification; protein ubiquitination.</text>
</comment>
<comment type="subunit">
    <text evidence="2 3 7">Component of multiple BCR (BTB-CUL3-RBX1) E3 ubiquitin-protein ligase complexes formed of cul3, rbx1 and a variable BTB domain-containing protein acting as both, adapter to cullin and substrate recognition subunit (By similarity). Interacts with btbd6 (PubMed:18855900).</text>
</comment>
<comment type="subcellular location">
    <subcellularLocation>
        <location evidence="2">Nucleus</location>
    </subcellularLocation>
</comment>
<comment type="PTM">
    <text evidence="2">Neddylated. Attachment of NEDD8 is required for the E3 ubiquitin-protein ligase activity of the SCF-like complex.</text>
</comment>
<comment type="similarity">
    <text evidence="5">Belongs to the cullin family.</text>
</comment>
<sequence length="768" mass="88955">MSNLGKSTGSRKDTKMRIRAFPMTMDEKYVNSIWDLLKNAIQEIQRKNNSGLSFEELYRNAYTMVLHKHGEKLYTGLREVVTEHLINKVREDVLNSLNNNFLQTLNQAWNDHQTAMVMIRDILMYMDRVYVQQNNVENVYNLGLIIFRDQVVRYGCIRDHLRQTLLDMIARERKGEVVDRGAIRNACQMLMILGLEGRSVYEEDFEAPFLEMSAEFFQMESQKFLAENSASVYIKKVEARINEEIERVMHCLDKSTEEPIVKVVERELISKHMKTIVEMENSGLVHMLKNGKTEDLACMYKLFSRVPNGLKTMCECMSLYLREQGKALVSEEGEGKNPVDYIQGLLDLKSRFDRFLQESFSNDRLFKQTIAGDFEYFLNLNSRSPEYLSLFIDDKLKKGVKGLTEQEVESILDKAMVLFRFMQEKDVFERYYKQHLARRLLTNKSVSDDSEKNMISKLKTECGCQFTSKLEGMFRDMSISNTTMDEFRQHLQTTGVSLGGVDLTVRVLTTGYWPTQSATPKCNIPPSPRHAFEIFRRFYLAKHSGRQLTLQHHMGSADLNATFYGAVKKEDGSEVGVGGAQVTGSNTRKHILQVSTFQMTILMLFNNREKYTFEEIQQETDIPERELVRALQSLACGKPTQRVLTKEPKSKEIESGHMFTVNDQFTSKLHRVKIQTVAAKQGESDPERKETRQKVDDDRKHEIEAAIVRIMKSRKKMQHNVLVAEVTQQLKARFLPSPVVIKKRIEGLIEREYLARTPEDRKVYTYVA</sequence>
<reference key="1">
    <citation type="submission" date="2004-06" db="EMBL/GenBank/DDBJ databases">
        <authorList>
            <consortium name="NIH - Xenopus Gene Collection (XGC) project"/>
        </authorList>
    </citation>
    <scope>NUCLEOTIDE SEQUENCE [LARGE SCALE MRNA]</scope>
    <source>
        <tissue>Embryo</tissue>
    </source>
</reference>
<reference key="2">
    <citation type="journal article" date="2008" name="Dev. Dyn.">
        <title>Xenopus BTBD6 and its Drosophila homologue lute are required for neuronal development.</title>
        <authorList>
            <person name="Bury F.J."/>
            <person name="Moers V."/>
            <person name="Yan J."/>
            <person name="Souopgui J."/>
            <person name="Quan X.J."/>
            <person name="De Geest N."/>
            <person name="Kricha S."/>
            <person name="Hassan B.A."/>
            <person name="Bellefroid E.J."/>
        </authorList>
    </citation>
    <scope>INTERACTION WITH BTBD6</scope>
</reference>
<dbReference type="EMBL" id="BC073186">
    <property type="protein sequence ID" value="AAH73186.1"/>
    <property type="molecule type" value="mRNA"/>
</dbReference>
<dbReference type="SMR" id="Q6GPF3"/>
<dbReference type="BioGRID" id="102266">
    <property type="interactions" value="1"/>
</dbReference>
<dbReference type="DNASU" id="444103"/>
<dbReference type="GeneID" id="444103"/>
<dbReference type="KEGG" id="xla:444103"/>
<dbReference type="AGR" id="Xenbase:XB-GENE-6256683"/>
<dbReference type="CTD" id="444103"/>
<dbReference type="Xenbase" id="XB-GENE-6256683">
    <property type="gene designation" value="cul3.S"/>
</dbReference>
<dbReference type="OMA" id="MYTLFNH"/>
<dbReference type="OrthoDB" id="27073at2759"/>
<dbReference type="UniPathway" id="UPA00143"/>
<dbReference type="Proteomes" id="UP000186698">
    <property type="component" value="Chromosome 5S"/>
</dbReference>
<dbReference type="Bgee" id="444103">
    <property type="expression patterns" value="Expressed in blastula and 19 other cell types or tissues"/>
</dbReference>
<dbReference type="GO" id="GO:0005813">
    <property type="term" value="C:centrosome"/>
    <property type="evidence" value="ECO:0000250"/>
    <property type="project" value="UniProtKB"/>
</dbReference>
<dbReference type="GO" id="GO:0031463">
    <property type="term" value="C:Cul3-RING ubiquitin ligase complex"/>
    <property type="evidence" value="ECO:0000250"/>
    <property type="project" value="UniProtKB"/>
</dbReference>
<dbReference type="GO" id="GO:0005737">
    <property type="term" value="C:cytoplasm"/>
    <property type="evidence" value="ECO:0007669"/>
    <property type="project" value="GOC"/>
</dbReference>
<dbReference type="GO" id="GO:0072686">
    <property type="term" value="C:mitotic spindle"/>
    <property type="evidence" value="ECO:0000250"/>
    <property type="project" value="UniProtKB"/>
</dbReference>
<dbReference type="GO" id="GO:0005634">
    <property type="term" value="C:nucleus"/>
    <property type="evidence" value="ECO:0000250"/>
    <property type="project" value="UniProtKB"/>
</dbReference>
<dbReference type="GO" id="GO:0005827">
    <property type="term" value="C:polar microtubule"/>
    <property type="evidence" value="ECO:0000250"/>
    <property type="project" value="UniProtKB"/>
</dbReference>
<dbReference type="GO" id="GO:0000922">
    <property type="term" value="C:spindle pole"/>
    <property type="evidence" value="ECO:0000250"/>
    <property type="project" value="UniProtKB"/>
</dbReference>
<dbReference type="GO" id="GO:0031625">
    <property type="term" value="F:ubiquitin protein ligase binding"/>
    <property type="evidence" value="ECO:0000318"/>
    <property type="project" value="GO_Central"/>
</dbReference>
<dbReference type="GO" id="GO:0016477">
    <property type="term" value="P:cell migration"/>
    <property type="evidence" value="ECO:0000250"/>
    <property type="project" value="UniProtKB"/>
</dbReference>
<dbReference type="GO" id="GO:0048208">
    <property type="term" value="P:COPII vesicle coating"/>
    <property type="evidence" value="ECO:0000250"/>
    <property type="project" value="UniProtKB"/>
</dbReference>
<dbReference type="GO" id="GO:0040016">
    <property type="term" value="P:embryonic cleavage"/>
    <property type="evidence" value="ECO:0000250"/>
    <property type="project" value="UniProtKB"/>
</dbReference>
<dbReference type="GO" id="GO:0006888">
    <property type="term" value="P:endoplasmic reticulum to Golgi vesicle-mediated transport"/>
    <property type="evidence" value="ECO:0000250"/>
    <property type="project" value="UniProtKB"/>
</dbReference>
<dbReference type="GO" id="GO:0007229">
    <property type="term" value="P:integrin-mediated signaling pathway"/>
    <property type="evidence" value="ECO:0000250"/>
    <property type="project" value="UniProtKB"/>
</dbReference>
<dbReference type="GO" id="GO:0007080">
    <property type="term" value="P:mitotic metaphase chromosome alignment"/>
    <property type="evidence" value="ECO:0000250"/>
    <property type="project" value="UniProtKB"/>
</dbReference>
<dbReference type="GO" id="GO:0035024">
    <property type="term" value="P:negative regulation of Rho protein signal transduction"/>
    <property type="evidence" value="ECO:0000250"/>
    <property type="project" value="UniProtKB"/>
</dbReference>
<dbReference type="GO" id="GO:1901992">
    <property type="term" value="P:positive regulation of mitotic cell cycle phase transition"/>
    <property type="evidence" value="ECO:0000250"/>
    <property type="project" value="UniProtKB"/>
</dbReference>
<dbReference type="GO" id="GO:0045842">
    <property type="term" value="P:positive regulation of mitotic metaphase/anaphase transition"/>
    <property type="evidence" value="ECO:0000250"/>
    <property type="project" value="UniProtKB"/>
</dbReference>
<dbReference type="GO" id="GO:0043161">
    <property type="term" value="P:proteasome-mediated ubiquitin-dependent protein catabolic process"/>
    <property type="evidence" value="ECO:0000250"/>
    <property type="project" value="UniProtKB"/>
</dbReference>
<dbReference type="GO" id="GO:0006513">
    <property type="term" value="P:protein monoubiquitination"/>
    <property type="evidence" value="ECO:0000250"/>
    <property type="project" value="UniProtKB"/>
</dbReference>
<dbReference type="GO" id="GO:0016567">
    <property type="term" value="P:protein ubiquitination"/>
    <property type="evidence" value="ECO:0000250"/>
    <property type="project" value="UniProtKB"/>
</dbReference>
<dbReference type="GO" id="GO:0017145">
    <property type="term" value="P:stem cell division"/>
    <property type="evidence" value="ECO:0000250"/>
    <property type="project" value="UniProtKB"/>
</dbReference>
<dbReference type="GO" id="GO:0043149">
    <property type="term" value="P:stress fiber assembly"/>
    <property type="evidence" value="ECO:0000250"/>
    <property type="project" value="UniProtKB"/>
</dbReference>
<dbReference type="FunFam" id="1.10.10.10:FF:000091">
    <property type="entry name" value="Cullin 3"/>
    <property type="match status" value="1"/>
</dbReference>
<dbReference type="FunFam" id="1.20.1310.10:FF:000001">
    <property type="entry name" value="Cullin 3"/>
    <property type="match status" value="1"/>
</dbReference>
<dbReference type="FunFam" id="1.20.1310.10:FF:000005">
    <property type="entry name" value="Cullin 3"/>
    <property type="match status" value="1"/>
</dbReference>
<dbReference type="FunFam" id="1.20.1310.10:FF:000006">
    <property type="entry name" value="Cullin 3"/>
    <property type="match status" value="1"/>
</dbReference>
<dbReference type="FunFam" id="1.20.1310.10:FF:000002">
    <property type="entry name" value="cullin-3 isoform X1"/>
    <property type="match status" value="1"/>
</dbReference>
<dbReference type="FunFam" id="3.30.230.130:FF:000002">
    <property type="entry name" value="cullin-3 isoform X1"/>
    <property type="match status" value="1"/>
</dbReference>
<dbReference type="Gene3D" id="1.20.1310.10">
    <property type="entry name" value="Cullin Repeats"/>
    <property type="match status" value="4"/>
</dbReference>
<dbReference type="Gene3D" id="3.30.230.130">
    <property type="entry name" value="Cullin, Chain C, Domain 2"/>
    <property type="match status" value="1"/>
</dbReference>
<dbReference type="Gene3D" id="1.10.10.10">
    <property type="entry name" value="Winged helix-like DNA-binding domain superfamily/Winged helix DNA-binding domain"/>
    <property type="match status" value="1"/>
</dbReference>
<dbReference type="InterPro" id="IPR045093">
    <property type="entry name" value="Cullin"/>
</dbReference>
<dbReference type="InterPro" id="IPR016157">
    <property type="entry name" value="Cullin_CS"/>
</dbReference>
<dbReference type="InterPro" id="IPR016158">
    <property type="entry name" value="Cullin_homology"/>
</dbReference>
<dbReference type="InterPro" id="IPR036317">
    <property type="entry name" value="Cullin_homology_sf"/>
</dbReference>
<dbReference type="InterPro" id="IPR001373">
    <property type="entry name" value="Cullin_N"/>
</dbReference>
<dbReference type="InterPro" id="IPR019559">
    <property type="entry name" value="Cullin_neddylation_domain"/>
</dbReference>
<dbReference type="InterPro" id="IPR016159">
    <property type="entry name" value="Cullin_repeat-like_dom_sf"/>
</dbReference>
<dbReference type="InterPro" id="IPR036388">
    <property type="entry name" value="WH-like_DNA-bd_sf"/>
</dbReference>
<dbReference type="InterPro" id="IPR036390">
    <property type="entry name" value="WH_DNA-bd_sf"/>
</dbReference>
<dbReference type="PANTHER" id="PTHR11932">
    <property type="entry name" value="CULLIN"/>
    <property type="match status" value="1"/>
</dbReference>
<dbReference type="Pfam" id="PF00888">
    <property type="entry name" value="Cullin"/>
    <property type="match status" value="1"/>
</dbReference>
<dbReference type="Pfam" id="PF10557">
    <property type="entry name" value="Cullin_Nedd8"/>
    <property type="match status" value="1"/>
</dbReference>
<dbReference type="SMART" id="SM00182">
    <property type="entry name" value="CULLIN"/>
    <property type="match status" value="1"/>
</dbReference>
<dbReference type="SMART" id="SM00884">
    <property type="entry name" value="Cullin_Nedd8"/>
    <property type="match status" value="1"/>
</dbReference>
<dbReference type="SUPFAM" id="SSF75632">
    <property type="entry name" value="Cullin homology domain"/>
    <property type="match status" value="1"/>
</dbReference>
<dbReference type="SUPFAM" id="SSF74788">
    <property type="entry name" value="Cullin repeat-like"/>
    <property type="match status" value="1"/>
</dbReference>
<dbReference type="SUPFAM" id="SSF46785">
    <property type="entry name" value="Winged helix' DNA-binding domain"/>
    <property type="match status" value="1"/>
</dbReference>
<dbReference type="PROSITE" id="PS01256">
    <property type="entry name" value="CULLIN_1"/>
    <property type="match status" value="1"/>
</dbReference>
<dbReference type="PROSITE" id="PS50069">
    <property type="entry name" value="CULLIN_2"/>
    <property type="match status" value="1"/>
</dbReference>
<protein>
    <recommendedName>
        <fullName>Cullin-3-B</fullName>
        <shortName>CUL-3-B</shortName>
    </recommendedName>
</protein>
<keyword id="KW-0131">Cell cycle</keyword>
<keyword id="KW-0132">Cell division</keyword>
<keyword id="KW-0931">ER-Golgi transport</keyword>
<keyword id="KW-1017">Isopeptide bond</keyword>
<keyword id="KW-0498">Mitosis</keyword>
<keyword id="KW-0539">Nucleus</keyword>
<keyword id="KW-1185">Reference proteome</keyword>
<keyword id="KW-0813">Transport</keyword>
<keyword id="KW-0832">Ubl conjugation</keyword>
<accession>Q6GPF3</accession>
<gene>
    <name type="primary">cul3b</name>
</gene>
<feature type="chain" id="PRO_0000380253" description="Cullin-3-B">
    <location>
        <begin position="1"/>
        <end position="768"/>
    </location>
</feature>
<feature type="domain" description="Cullin neddylation" evidence="4">
    <location>
        <begin position="698"/>
        <end position="760"/>
    </location>
</feature>
<feature type="region of interest" description="Disordered" evidence="6">
    <location>
        <begin position="677"/>
        <end position="698"/>
    </location>
</feature>
<feature type="compositionally biased region" description="Basic and acidic residues" evidence="6">
    <location>
        <begin position="682"/>
        <end position="698"/>
    </location>
</feature>
<feature type="cross-link" description="Glycyl lysine isopeptide (Lys-Gly) (interchain with G-Cter in NEDD8)" evidence="1">
    <location>
        <position position="712"/>
    </location>
</feature>
<name>CUL3B_XENLA</name>
<proteinExistence type="evidence at protein level"/>
<organism>
    <name type="scientific">Xenopus laevis</name>
    <name type="common">African clawed frog</name>
    <dbReference type="NCBI Taxonomy" id="8355"/>
    <lineage>
        <taxon>Eukaryota</taxon>
        <taxon>Metazoa</taxon>
        <taxon>Chordata</taxon>
        <taxon>Craniata</taxon>
        <taxon>Vertebrata</taxon>
        <taxon>Euteleostomi</taxon>
        <taxon>Amphibia</taxon>
        <taxon>Batrachia</taxon>
        <taxon>Anura</taxon>
        <taxon>Pipoidea</taxon>
        <taxon>Pipidae</taxon>
        <taxon>Xenopodinae</taxon>
        <taxon>Xenopus</taxon>
        <taxon>Xenopus</taxon>
    </lineage>
</organism>